<sequence length="89" mass="10631">MALTQERKNEIIAEYRVHDTDTGSPEVQIAVLTAEINSLNEHVRVHKKDHHSYRGLMKMVGHRRNLLTYLRKKDVQRYRELIKRLGLRR</sequence>
<reference key="1">
    <citation type="journal article" date="2006" name="J. Bacteriol.">
        <title>Whole-genome sequence of Listeria welshimeri reveals common steps in genome reduction with Listeria innocua as compared to Listeria monocytogenes.</title>
        <authorList>
            <person name="Hain T."/>
            <person name="Steinweg C."/>
            <person name="Kuenne C.T."/>
            <person name="Billion A."/>
            <person name="Ghai R."/>
            <person name="Chatterjee S.S."/>
            <person name="Domann E."/>
            <person name="Kaerst U."/>
            <person name="Goesmann A."/>
            <person name="Bekel T."/>
            <person name="Bartels D."/>
            <person name="Kaiser O."/>
            <person name="Meyer F."/>
            <person name="Puehler A."/>
            <person name="Weisshaar B."/>
            <person name="Wehland J."/>
            <person name="Liang C."/>
            <person name="Dandekar T."/>
            <person name="Lampidis R."/>
            <person name="Kreft J."/>
            <person name="Goebel W."/>
            <person name="Chakraborty T."/>
        </authorList>
    </citation>
    <scope>NUCLEOTIDE SEQUENCE [LARGE SCALE GENOMIC DNA]</scope>
    <source>
        <strain>ATCC 35897 / DSM 20650 / CCUG 15529 / CIP 8149 / NCTC 11857 / SLCC 5334 / V8</strain>
    </source>
</reference>
<proteinExistence type="inferred from homology"/>
<keyword id="KW-0687">Ribonucleoprotein</keyword>
<keyword id="KW-0689">Ribosomal protein</keyword>
<keyword id="KW-0694">RNA-binding</keyword>
<keyword id="KW-0699">rRNA-binding</keyword>
<accession>A0AID1</accession>
<organism>
    <name type="scientific">Listeria welshimeri serovar 6b (strain ATCC 35897 / DSM 20650 / CCUG 15529 / CIP 8149 / NCTC 11857 / SLCC 5334 / V8)</name>
    <dbReference type="NCBI Taxonomy" id="386043"/>
    <lineage>
        <taxon>Bacteria</taxon>
        <taxon>Bacillati</taxon>
        <taxon>Bacillota</taxon>
        <taxon>Bacilli</taxon>
        <taxon>Bacillales</taxon>
        <taxon>Listeriaceae</taxon>
        <taxon>Listeria</taxon>
    </lineage>
</organism>
<evidence type="ECO:0000255" key="1">
    <source>
        <dbReference type="HAMAP-Rule" id="MF_01343"/>
    </source>
</evidence>
<evidence type="ECO:0000305" key="2"/>
<name>RS15_LISW6</name>
<comment type="function">
    <text evidence="1">One of the primary rRNA binding proteins, it binds directly to 16S rRNA where it helps nucleate assembly of the platform of the 30S subunit by binding and bridging several RNA helices of the 16S rRNA.</text>
</comment>
<comment type="function">
    <text evidence="1">Forms an intersubunit bridge (bridge B4) with the 23S rRNA of the 50S subunit in the ribosome.</text>
</comment>
<comment type="subunit">
    <text evidence="1">Part of the 30S ribosomal subunit. Forms a bridge to the 50S subunit in the 70S ribosome, contacting the 23S rRNA.</text>
</comment>
<comment type="similarity">
    <text evidence="1">Belongs to the universal ribosomal protein uS15 family.</text>
</comment>
<protein>
    <recommendedName>
        <fullName evidence="1">Small ribosomal subunit protein uS15</fullName>
    </recommendedName>
    <alternativeName>
        <fullName evidence="2">30S ribosomal protein S15</fullName>
    </alternativeName>
</protein>
<gene>
    <name evidence="1" type="primary">rpsO</name>
    <name type="ordered locus">lwe1345</name>
</gene>
<dbReference type="EMBL" id="AM263198">
    <property type="protein sequence ID" value="CAK20763.1"/>
    <property type="molecule type" value="Genomic_DNA"/>
</dbReference>
<dbReference type="RefSeq" id="WP_003719603.1">
    <property type="nucleotide sequence ID" value="NC_008555.1"/>
</dbReference>
<dbReference type="SMR" id="A0AID1"/>
<dbReference type="STRING" id="386043.lwe1345"/>
<dbReference type="GeneID" id="93239206"/>
<dbReference type="KEGG" id="lwe:lwe1345"/>
<dbReference type="eggNOG" id="COG0184">
    <property type="taxonomic scope" value="Bacteria"/>
</dbReference>
<dbReference type="HOGENOM" id="CLU_148518_0_0_9"/>
<dbReference type="OrthoDB" id="9799262at2"/>
<dbReference type="Proteomes" id="UP000000779">
    <property type="component" value="Chromosome"/>
</dbReference>
<dbReference type="GO" id="GO:0022627">
    <property type="term" value="C:cytosolic small ribosomal subunit"/>
    <property type="evidence" value="ECO:0007669"/>
    <property type="project" value="TreeGrafter"/>
</dbReference>
<dbReference type="GO" id="GO:0019843">
    <property type="term" value="F:rRNA binding"/>
    <property type="evidence" value="ECO:0007669"/>
    <property type="project" value="UniProtKB-UniRule"/>
</dbReference>
<dbReference type="GO" id="GO:0003735">
    <property type="term" value="F:structural constituent of ribosome"/>
    <property type="evidence" value="ECO:0007669"/>
    <property type="project" value="InterPro"/>
</dbReference>
<dbReference type="GO" id="GO:0006412">
    <property type="term" value="P:translation"/>
    <property type="evidence" value="ECO:0007669"/>
    <property type="project" value="UniProtKB-UniRule"/>
</dbReference>
<dbReference type="CDD" id="cd00353">
    <property type="entry name" value="Ribosomal_S15p_S13e"/>
    <property type="match status" value="1"/>
</dbReference>
<dbReference type="FunFam" id="1.10.287.10:FF:000002">
    <property type="entry name" value="30S ribosomal protein S15"/>
    <property type="match status" value="1"/>
</dbReference>
<dbReference type="Gene3D" id="6.10.250.3130">
    <property type="match status" value="1"/>
</dbReference>
<dbReference type="Gene3D" id="1.10.287.10">
    <property type="entry name" value="S15/NS1, RNA-binding"/>
    <property type="match status" value="1"/>
</dbReference>
<dbReference type="HAMAP" id="MF_01343_B">
    <property type="entry name" value="Ribosomal_uS15_B"/>
    <property type="match status" value="1"/>
</dbReference>
<dbReference type="InterPro" id="IPR000589">
    <property type="entry name" value="Ribosomal_uS15"/>
</dbReference>
<dbReference type="InterPro" id="IPR005290">
    <property type="entry name" value="Ribosomal_uS15_bac-type"/>
</dbReference>
<dbReference type="InterPro" id="IPR009068">
    <property type="entry name" value="uS15_NS1_RNA-bd_sf"/>
</dbReference>
<dbReference type="NCBIfam" id="TIGR00952">
    <property type="entry name" value="S15_bact"/>
    <property type="match status" value="1"/>
</dbReference>
<dbReference type="PANTHER" id="PTHR23321">
    <property type="entry name" value="RIBOSOMAL PROTEIN S15, BACTERIAL AND ORGANELLAR"/>
    <property type="match status" value="1"/>
</dbReference>
<dbReference type="PANTHER" id="PTHR23321:SF26">
    <property type="entry name" value="SMALL RIBOSOMAL SUBUNIT PROTEIN US15M"/>
    <property type="match status" value="1"/>
</dbReference>
<dbReference type="Pfam" id="PF00312">
    <property type="entry name" value="Ribosomal_S15"/>
    <property type="match status" value="1"/>
</dbReference>
<dbReference type="SMART" id="SM01387">
    <property type="entry name" value="Ribosomal_S15"/>
    <property type="match status" value="1"/>
</dbReference>
<dbReference type="SUPFAM" id="SSF47060">
    <property type="entry name" value="S15/NS1 RNA-binding domain"/>
    <property type="match status" value="1"/>
</dbReference>
<dbReference type="PROSITE" id="PS00362">
    <property type="entry name" value="RIBOSOMAL_S15"/>
    <property type="match status" value="1"/>
</dbReference>
<feature type="chain" id="PRO_1000054806" description="Small ribosomal subunit protein uS15">
    <location>
        <begin position="1"/>
        <end position="89"/>
    </location>
</feature>